<name>SSB_PAEAU</name>
<feature type="chain" id="PRO_0000096000" description="Single-stranded DNA-binding protein">
    <location>
        <begin position="1"/>
        <end position="171"/>
    </location>
</feature>
<feature type="domain" description="SSB" evidence="1">
    <location>
        <begin position="1"/>
        <end position="110"/>
    </location>
</feature>
<feature type="region of interest" description="Disordered" evidence="2">
    <location>
        <begin position="118"/>
        <end position="171"/>
    </location>
</feature>
<feature type="compositionally biased region" description="Low complexity" evidence="2">
    <location>
        <begin position="118"/>
        <end position="127"/>
    </location>
</feature>
<feature type="compositionally biased region" description="Gly residues" evidence="2">
    <location>
        <begin position="128"/>
        <end position="138"/>
    </location>
</feature>
<feature type="compositionally biased region" description="Low complexity" evidence="2">
    <location>
        <begin position="139"/>
        <end position="164"/>
    </location>
</feature>
<protein>
    <recommendedName>
        <fullName evidence="1">Single-stranded DNA-binding protein</fullName>
        <shortName evidence="1">SSB</shortName>
    </recommendedName>
</protein>
<evidence type="ECO:0000255" key="1">
    <source>
        <dbReference type="HAMAP-Rule" id="MF_00984"/>
    </source>
</evidence>
<evidence type="ECO:0000256" key="2">
    <source>
        <dbReference type="SAM" id="MobiDB-lite"/>
    </source>
</evidence>
<organism>
    <name type="scientific">Paenarthrobacter aurescens</name>
    <name type="common">Arthrobacter aurescens</name>
    <dbReference type="NCBI Taxonomy" id="43663"/>
    <lineage>
        <taxon>Bacteria</taxon>
        <taxon>Bacillati</taxon>
        <taxon>Actinomycetota</taxon>
        <taxon>Actinomycetes</taxon>
        <taxon>Micrococcales</taxon>
        <taxon>Micrococcaceae</taxon>
        <taxon>Paenarthrobacter</taxon>
    </lineage>
</organism>
<reference key="1">
    <citation type="submission" date="2002-06" db="EMBL/GenBank/DDBJ databases">
        <title>A plasmid-encoded single-stranded DNA-binding protein from Arthrobacter aurescens strain TW17.</title>
        <authorList>
            <person name="Hanne L.F."/>
            <person name="Holochwost D."/>
            <person name="Kirk L.L."/>
            <person name="Bell J.R."/>
        </authorList>
    </citation>
    <scope>NUCLEOTIDE SEQUENCE [GENOMIC DNA]</scope>
    <source>
        <strain>TW17</strain>
    </source>
</reference>
<geneLocation type="plasmid"/>
<keyword id="KW-0238">DNA-binding</keyword>
<keyword id="KW-0614">Plasmid</keyword>
<gene>
    <name type="primary">ssb</name>
</gene>
<accession>Q8KSB6</accession>
<proteinExistence type="inferred from homology"/>
<comment type="subunit">
    <text evidence="1">Homotetramer.</text>
</comment>
<sequence length="171" mass="18267">MAGETTITVIGNLTSDPELRFTPSGSAVANFTIASTPRTFDRQSNEWKDGETLFLRASVWREAAENVAESLTKGTRVIVSGRLKSRSYETKEGEKRTVIELEVDEIGPSLRYANAKVNRTQRNNNQGAGNGGGFGNQGAGAQATQQDDPWAANSSASAGSWGNGPDSEPPF</sequence>
<dbReference type="EMBL" id="AF517942">
    <property type="protein sequence ID" value="AAM74937.1"/>
    <property type="molecule type" value="Genomic_DNA"/>
</dbReference>
<dbReference type="SMR" id="Q8KSB6"/>
<dbReference type="GO" id="GO:0009295">
    <property type="term" value="C:nucleoid"/>
    <property type="evidence" value="ECO:0007669"/>
    <property type="project" value="TreeGrafter"/>
</dbReference>
<dbReference type="GO" id="GO:0003697">
    <property type="term" value="F:single-stranded DNA binding"/>
    <property type="evidence" value="ECO:0007669"/>
    <property type="project" value="UniProtKB-UniRule"/>
</dbReference>
<dbReference type="GO" id="GO:0006260">
    <property type="term" value="P:DNA replication"/>
    <property type="evidence" value="ECO:0007669"/>
    <property type="project" value="InterPro"/>
</dbReference>
<dbReference type="CDD" id="cd04496">
    <property type="entry name" value="SSB_OBF"/>
    <property type="match status" value="1"/>
</dbReference>
<dbReference type="Gene3D" id="2.40.50.140">
    <property type="entry name" value="Nucleic acid-binding proteins"/>
    <property type="match status" value="1"/>
</dbReference>
<dbReference type="HAMAP" id="MF_00984">
    <property type="entry name" value="SSB"/>
    <property type="match status" value="1"/>
</dbReference>
<dbReference type="InterPro" id="IPR012340">
    <property type="entry name" value="NA-bd_OB-fold"/>
</dbReference>
<dbReference type="InterPro" id="IPR000424">
    <property type="entry name" value="Primosome_PriB/ssb"/>
</dbReference>
<dbReference type="InterPro" id="IPR011344">
    <property type="entry name" value="ssDNA-bd"/>
</dbReference>
<dbReference type="NCBIfam" id="NF005851">
    <property type="entry name" value="PRK07772.1"/>
    <property type="match status" value="1"/>
</dbReference>
<dbReference type="NCBIfam" id="TIGR00621">
    <property type="entry name" value="ssb"/>
    <property type="match status" value="1"/>
</dbReference>
<dbReference type="PANTHER" id="PTHR10302">
    <property type="entry name" value="SINGLE-STRANDED DNA-BINDING PROTEIN"/>
    <property type="match status" value="1"/>
</dbReference>
<dbReference type="PANTHER" id="PTHR10302:SF27">
    <property type="entry name" value="SINGLE-STRANDED DNA-BINDING PROTEIN"/>
    <property type="match status" value="1"/>
</dbReference>
<dbReference type="Pfam" id="PF00436">
    <property type="entry name" value="SSB"/>
    <property type="match status" value="1"/>
</dbReference>
<dbReference type="SUPFAM" id="SSF50249">
    <property type="entry name" value="Nucleic acid-binding proteins"/>
    <property type="match status" value="1"/>
</dbReference>
<dbReference type="PROSITE" id="PS50935">
    <property type="entry name" value="SSB"/>
    <property type="match status" value="1"/>
</dbReference>